<gene>
    <name evidence="1" type="primary">lipB</name>
    <name type="ordered locus">FTF1031</name>
</gene>
<reference key="1">
    <citation type="journal article" date="2007" name="PLoS ONE">
        <title>Genome sequencing shows that European isolates of Francisella tularensis subspecies tularensis are almost identical to US laboratory strain Schu S4.</title>
        <authorList>
            <person name="Chaudhuri R.R."/>
            <person name="Ren C.-P."/>
            <person name="Desmond L."/>
            <person name="Vincent G.A."/>
            <person name="Silman N.J."/>
            <person name="Brehm J.K."/>
            <person name="Elmore M.J."/>
            <person name="Hudson M.J."/>
            <person name="Forsman M."/>
            <person name="Isherwood K.E."/>
            <person name="Gurycova D."/>
            <person name="Minton N.P."/>
            <person name="Titball R.W."/>
            <person name="Pallen M.J."/>
            <person name="Vipond R."/>
        </authorList>
    </citation>
    <scope>NUCLEOTIDE SEQUENCE [LARGE SCALE GENOMIC DNA]</scope>
    <source>
        <strain>FSC 198</strain>
    </source>
</reference>
<protein>
    <recommendedName>
        <fullName evidence="1">Octanoyltransferase</fullName>
        <ecNumber evidence="1">2.3.1.181</ecNumber>
    </recommendedName>
    <alternativeName>
        <fullName evidence="1">Lipoate-protein ligase B</fullName>
    </alternativeName>
    <alternativeName>
        <fullName evidence="1">Lipoyl/octanoyl transferase</fullName>
    </alternativeName>
    <alternativeName>
        <fullName evidence="1">Octanoyl-[acyl-carrier-protein]-protein N-octanoyltransferase</fullName>
    </alternativeName>
</protein>
<dbReference type="EC" id="2.3.1.181" evidence="1"/>
<dbReference type="EMBL" id="AM286280">
    <property type="protein sequence ID" value="CAL09047.1"/>
    <property type="molecule type" value="Genomic_DNA"/>
</dbReference>
<dbReference type="RefSeq" id="WP_003021140.1">
    <property type="nucleotide sequence ID" value="NC_008245.1"/>
</dbReference>
<dbReference type="SMR" id="Q14HH8"/>
<dbReference type="KEGG" id="ftf:FTF1031"/>
<dbReference type="HOGENOM" id="CLU_035168_3_1_6"/>
<dbReference type="UniPathway" id="UPA00538">
    <property type="reaction ID" value="UER00592"/>
</dbReference>
<dbReference type="GO" id="GO:0005737">
    <property type="term" value="C:cytoplasm"/>
    <property type="evidence" value="ECO:0007669"/>
    <property type="project" value="UniProtKB-SubCell"/>
</dbReference>
<dbReference type="GO" id="GO:0033819">
    <property type="term" value="F:lipoyl(octanoyl) transferase activity"/>
    <property type="evidence" value="ECO:0007669"/>
    <property type="project" value="UniProtKB-EC"/>
</dbReference>
<dbReference type="GO" id="GO:0036211">
    <property type="term" value="P:protein modification process"/>
    <property type="evidence" value="ECO:0007669"/>
    <property type="project" value="InterPro"/>
</dbReference>
<dbReference type="CDD" id="cd16444">
    <property type="entry name" value="LipB"/>
    <property type="match status" value="1"/>
</dbReference>
<dbReference type="FunFam" id="3.30.930.10:FF:000020">
    <property type="entry name" value="Octanoyltransferase"/>
    <property type="match status" value="1"/>
</dbReference>
<dbReference type="Gene3D" id="3.30.930.10">
    <property type="entry name" value="Bira Bifunctional Protein, Domain 2"/>
    <property type="match status" value="1"/>
</dbReference>
<dbReference type="HAMAP" id="MF_00013">
    <property type="entry name" value="LipB"/>
    <property type="match status" value="1"/>
</dbReference>
<dbReference type="InterPro" id="IPR045864">
    <property type="entry name" value="aa-tRNA-synth_II/BPL/LPL"/>
</dbReference>
<dbReference type="InterPro" id="IPR004143">
    <property type="entry name" value="BPL_LPL_catalytic"/>
</dbReference>
<dbReference type="InterPro" id="IPR000544">
    <property type="entry name" value="Octanoyltransferase"/>
</dbReference>
<dbReference type="InterPro" id="IPR020605">
    <property type="entry name" value="Octanoyltransferase_CS"/>
</dbReference>
<dbReference type="NCBIfam" id="TIGR00214">
    <property type="entry name" value="lipB"/>
    <property type="match status" value="1"/>
</dbReference>
<dbReference type="NCBIfam" id="NF010922">
    <property type="entry name" value="PRK14342.1"/>
    <property type="match status" value="1"/>
</dbReference>
<dbReference type="PANTHER" id="PTHR10993:SF7">
    <property type="entry name" value="LIPOYLTRANSFERASE 2, MITOCHONDRIAL-RELATED"/>
    <property type="match status" value="1"/>
</dbReference>
<dbReference type="PANTHER" id="PTHR10993">
    <property type="entry name" value="OCTANOYLTRANSFERASE"/>
    <property type="match status" value="1"/>
</dbReference>
<dbReference type="Pfam" id="PF21948">
    <property type="entry name" value="LplA-B_cat"/>
    <property type="match status" value="1"/>
</dbReference>
<dbReference type="PIRSF" id="PIRSF016262">
    <property type="entry name" value="LPLase"/>
    <property type="match status" value="1"/>
</dbReference>
<dbReference type="SUPFAM" id="SSF55681">
    <property type="entry name" value="Class II aaRS and biotin synthetases"/>
    <property type="match status" value="1"/>
</dbReference>
<dbReference type="PROSITE" id="PS51733">
    <property type="entry name" value="BPL_LPL_CATALYTIC"/>
    <property type="match status" value="1"/>
</dbReference>
<dbReference type="PROSITE" id="PS01313">
    <property type="entry name" value="LIPB"/>
    <property type="match status" value="1"/>
</dbReference>
<proteinExistence type="inferred from homology"/>
<name>LIPB_FRAT1</name>
<sequence>MNNIYQKDLGLQQYTKVFDDMLEFTSTRTPETNDEIWLVEHPAVFTQGKHGKPEHILNSHNIPIVATDRGGQVTYHGPGQAVIYFLLDIKRNKLGAKKLVTTVEQACINMLDKYYNLKAHIIDGAHGIYINNQKIASLGLRIKQGKSYHGIAINTNMDLTPFSYINPCGYSGLKMCQLANFYQEADIKKVQQQYTAEFVTLLNNSI</sequence>
<evidence type="ECO:0000255" key="1">
    <source>
        <dbReference type="HAMAP-Rule" id="MF_00013"/>
    </source>
</evidence>
<evidence type="ECO:0000255" key="2">
    <source>
        <dbReference type="PROSITE-ProRule" id="PRU01067"/>
    </source>
</evidence>
<comment type="function">
    <text evidence="1">Catalyzes the transfer of endogenously produced octanoic acid from octanoyl-acyl-carrier-protein onto the lipoyl domains of lipoate-dependent enzymes. Lipoyl-ACP can also act as a substrate although octanoyl-ACP is likely to be the physiological substrate.</text>
</comment>
<comment type="catalytic activity">
    <reaction evidence="1">
        <text>octanoyl-[ACP] + L-lysyl-[protein] = N(6)-octanoyl-L-lysyl-[protein] + holo-[ACP] + H(+)</text>
        <dbReference type="Rhea" id="RHEA:17665"/>
        <dbReference type="Rhea" id="RHEA-COMP:9636"/>
        <dbReference type="Rhea" id="RHEA-COMP:9685"/>
        <dbReference type="Rhea" id="RHEA-COMP:9752"/>
        <dbReference type="Rhea" id="RHEA-COMP:9928"/>
        <dbReference type="ChEBI" id="CHEBI:15378"/>
        <dbReference type="ChEBI" id="CHEBI:29969"/>
        <dbReference type="ChEBI" id="CHEBI:64479"/>
        <dbReference type="ChEBI" id="CHEBI:78463"/>
        <dbReference type="ChEBI" id="CHEBI:78809"/>
        <dbReference type="EC" id="2.3.1.181"/>
    </reaction>
</comment>
<comment type="pathway">
    <text evidence="1">Protein modification; protein lipoylation via endogenous pathway; protein N(6)-(lipoyl)lysine from octanoyl-[acyl-carrier-protein]: step 1/2.</text>
</comment>
<comment type="subcellular location">
    <subcellularLocation>
        <location evidence="1">Cytoplasm</location>
    </subcellularLocation>
</comment>
<comment type="miscellaneous">
    <text evidence="1">In the reaction, the free carboxyl group of octanoic acid is attached via an amide linkage to the epsilon-amino group of a specific lysine residue of lipoyl domains of lipoate-dependent enzymes.</text>
</comment>
<comment type="similarity">
    <text evidence="1">Belongs to the LipB family.</text>
</comment>
<accession>Q14HH8</accession>
<feature type="chain" id="PRO_1000001099" description="Octanoyltransferase">
    <location>
        <begin position="1"/>
        <end position="206"/>
    </location>
</feature>
<feature type="domain" description="BPL/LPL catalytic" evidence="2">
    <location>
        <begin position="30"/>
        <end position="206"/>
    </location>
</feature>
<feature type="active site" description="Acyl-thioester intermediate" evidence="1">
    <location>
        <position position="168"/>
    </location>
</feature>
<feature type="binding site" evidence="1">
    <location>
        <begin position="69"/>
        <end position="76"/>
    </location>
    <ligand>
        <name>substrate</name>
    </ligand>
</feature>
<feature type="binding site" evidence="1">
    <location>
        <begin position="137"/>
        <end position="139"/>
    </location>
    <ligand>
        <name>substrate</name>
    </ligand>
</feature>
<feature type="binding site" evidence="1">
    <location>
        <begin position="150"/>
        <end position="152"/>
    </location>
    <ligand>
        <name>substrate</name>
    </ligand>
</feature>
<feature type="site" description="Lowers pKa of active site Cys" evidence="1">
    <location>
        <position position="134"/>
    </location>
</feature>
<keyword id="KW-0012">Acyltransferase</keyword>
<keyword id="KW-0963">Cytoplasm</keyword>
<keyword id="KW-0808">Transferase</keyword>
<organism>
    <name type="scientific">Francisella tularensis subsp. tularensis (strain FSC 198)</name>
    <dbReference type="NCBI Taxonomy" id="393115"/>
    <lineage>
        <taxon>Bacteria</taxon>
        <taxon>Pseudomonadati</taxon>
        <taxon>Pseudomonadota</taxon>
        <taxon>Gammaproteobacteria</taxon>
        <taxon>Thiotrichales</taxon>
        <taxon>Francisellaceae</taxon>
        <taxon>Francisella</taxon>
    </lineage>
</organism>